<reference key="1">
    <citation type="journal article" date="1998" name="Science">
        <title>Genome sequence of an obligate intracellular pathogen of humans: Chlamydia trachomatis.</title>
        <authorList>
            <person name="Stephens R.S."/>
            <person name="Kalman S."/>
            <person name="Lammel C.J."/>
            <person name="Fan J."/>
            <person name="Marathe R."/>
            <person name="Aravind L."/>
            <person name="Mitchell W.P."/>
            <person name="Olinger L."/>
            <person name="Tatusov R.L."/>
            <person name="Zhao Q."/>
            <person name="Koonin E.V."/>
            <person name="Davis R.W."/>
        </authorList>
    </citation>
    <scope>NUCLEOTIDE SEQUENCE [LARGE SCALE GENOMIC DNA]</scope>
    <source>
        <strain>ATCC VR-885 / DSM 19411 / UW-3/Cx</strain>
    </source>
</reference>
<keyword id="KW-1185">Reference proteome</keyword>
<keyword id="KW-0686">Riboflavin biosynthesis</keyword>
<keyword id="KW-0808">Transferase</keyword>
<gene>
    <name evidence="1" type="primary">ribH</name>
    <name type="synonym">ribE</name>
    <name type="ordered locus">CT_732</name>
</gene>
<proteinExistence type="inferred from homology"/>
<accession>O84737</accession>
<sequence>MKPLKGCPVAKDVRVAIVGSCFNSPIADRLVAGAQETFFDFGGDPSSLTIVRVPGAFEIPCAIKKLLSTSGQFHAVVACGVLIQGETSHYEHIADSVAAGVSRLSLDFCLPITFSVITAPNMEAAWERAGIKGPNLGASGMKTALEMASLFSLIGKE</sequence>
<dbReference type="EC" id="2.5.1.78" evidence="1"/>
<dbReference type="EMBL" id="AE001273">
    <property type="protein sequence ID" value="AAC68327.1"/>
    <property type="molecule type" value="Genomic_DNA"/>
</dbReference>
<dbReference type="PIR" id="C71477">
    <property type="entry name" value="C71477"/>
</dbReference>
<dbReference type="RefSeq" id="NP_220251.1">
    <property type="nucleotide sequence ID" value="NC_000117.1"/>
</dbReference>
<dbReference type="RefSeq" id="WP_009872109.1">
    <property type="nucleotide sequence ID" value="NC_000117.1"/>
</dbReference>
<dbReference type="SMR" id="O84737"/>
<dbReference type="FunCoup" id="O84737">
    <property type="interactions" value="260"/>
</dbReference>
<dbReference type="STRING" id="272561.CT_732"/>
<dbReference type="EnsemblBacteria" id="AAC68327">
    <property type="protein sequence ID" value="AAC68327"/>
    <property type="gene ID" value="CT_732"/>
</dbReference>
<dbReference type="GeneID" id="884527"/>
<dbReference type="KEGG" id="ctr:CT_732"/>
<dbReference type="PATRIC" id="fig|272561.5.peg.805"/>
<dbReference type="HOGENOM" id="CLU_089358_1_1_0"/>
<dbReference type="InParanoid" id="O84737"/>
<dbReference type="OrthoDB" id="9809709at2"/>
<dbReference type="BRENDA" id="2.5.1.78">
    <property type="organism ID" value="1315"/>
</dbReference>
<dbReference type="UniPathway" id="UPA00275">
    <property type="reaction ID" value="UER00404"/>
</dbReference>
<dbReference type="Proteomes" id="UP000000431">
    <property type="component" value="Chromosome"/>
</dbReference>
<dbReference type="GO" id="GO:0005737">
    <property type="term" value="C:cytoplasm"/>
    <property type="evidence" value="ECO:0000318"/>
    <property type="project" value="GO_Central"/>
</dbReference>
<dbReference type="GO" id="GO:0005829">
    <property type="term" value="C:cytosol"/>
    <property type="evidence" value="ECO:0000318"/>
    <property type="project" value="GO_Central"/>
</dbReference>
<dbReference type="GO" id="GO:0009349">
    <property type="term" value="C:riboflavin synthase complex"/>
    <property type="evidence" value="ECO:0007669"/>
    <property type="project" value="InterPro"/>
</dbReference>
<dbReference type="GO" id="GO:0000906">
    <property type="term" value="F:6,7-dimethyl-8-ribityllumazine synthase activity"/>
    <property type="evidence" value="ECO:0000318"/>
    <property type="project" value="GO_Central"/>
</dbReference>
<dbReference type="GO" id="GO:0009231">
    <property type="term" value="P:riboflavin biosynthetic process"/>
    <property type="evidence" value="ECO:0000318"/>
    <property type="project" value="GO_Central"/>
</dbReference>
<dbReference type="CDD" id="cd09209">
    <property type="entry name" value="Lumazine_synthase-I"/>
    <property type="match status" value="1"/>
</dbReference>
<dbReference type="Gene3D" id="3.40.50.960">
    <property type="entry name" value="Lumazine/riboflavin synthase"/>
    <property type="match status" value="1"/>
</dbReference>
<dbReference type="HAMAP" id="MF_00178">
    <property type="entry name" value="Lumazine_synth"/>
    <property type="match status" value="1"/>
</dbReference>
<dbReference type="InterPro" id="IPR034964">
    <property type="entry name" value="LS"/>
</dbReference>
<dbReference type="InterPro" id="IPR002180">
    <property type="entry name" value="LS/RS"/>
</dbReference>
<dbReference type="InterPro" id="IPR036467">
    <property type="entry name" value="LS/RS_sf"/>
</dbReference>
<dbReference type="NCBIfam" id="TIGR00114">
    <property type="entry name" value="lumazine-synth"/>
    <property type="match status" value="1"/>
</dbReference>
<dbReference type="PANTHER" id="PTHR21058:SF0">
    <property type="entry name" value="6,7-DIMETHYL-8-RIBITYLLUMAZINE SYNTHASE"/>
    <property type="match status" value="1"/>
</dbReference>
<dbReference type="PANTHER" id="PTHR21058">
    <property type="entry name" value="6,7-DIMETHYL-8-RIBITYLLUMAZINE SYNTHASE DMRL SYNTHASE LUMAZINE SYNTHASE"/>
    <property type="match status" value="1"/>
</dbReference>
<dbReference type="Pfam" id="PF00885">
    <property type="entry name" value="DMRL_synthase"/>
    <property type="match status" value="1"/>
</dbReference>
<dbReference type="SUPFAM" id="SSF52121">
    <property type="entry name" value="Lumazine synthase"/>
    <property type="match status" value="1"/>
</dbReference>
<feature type="chain" id="PRO_0000134741" description="6,7-dimethyl-8-ribityllumazine synthase">
    <location>
        <begin position="1"/>
        <end position="157"/>
    </location>
</feature>
<feature type="active site" description="Proton donor" evidence="1">
    <location>
        <position position="89"/>
    </location>
</feature>
<feature type="binding site" evidence="1">
    <location>
        <position position="22"/>
    </location>
    <ligand>
        <name>5-amino-6-(D-ribitylamino)uracil</name>
        <dbReference type="ChEBI" id="CHEBI:15934"/>
    </ligand>
</feature>
<feature type="binding site" evidence="1">
    <location>
        <begin position="56"/>
        <end position="58"/>
    </location>
    <ligand>
        <name>5-amino-6-(D-ribitylamino)uracil</name>
        <dbReference type="ChEBI" id="CHEBI:15934"/>
    </ligand>
</feature>
<feature type="binding site" evidence="1">
    <location>
        <begin position="81"/>
        <end position="83"/>
    </location>
    <ligand>
        <name>5-amino-6-(D-ribitylamino)uracil</name>
        <dbReference type="ChEBI" id="CHEBI:15934"/>
    </ligand>
</feature>
<feature type="binding site" evidence="1">
    <location>
        <begin position="86"/>
        <end position="87"/>
    </location>
    <ligand>
        <name>(2S)-2-hydroxy-3-oxobutyl phosphate</name>
        <dbReference type="ChEBI" id="CHEBI:58830"/>
    </ligand>
</feature>
<feature type="binding site" evidence="1">
    <location>
        <position position="114"/>
    </location>
    <ligand>
        <name>5-amino-6-(D-ribitylamino)uracil</name>
        <dbReference type="ChEBI" id="CHEBI:15934"/>
    </ligand>
</feature>
<feature type="binding site" evidence="1">
    <location>
        <position position="128"/>
    </location>
    <ligand>
        <name>(2S)-2-hydroxy-3-oxobutyl phosphate</name>
        <dbReference type="ChEBI" id="CHEBI:58830"/>
    </ligand>
</feature>
<protein>
    <recommendedName>
        <fullName evidence="1">6,7-dimethyl-8-ribityllumazine synthase</fullName>
        <shortName evidence="1">DMRL synthase</shortName>
        <shortName evidence="1">LS</shortName>
        <shortName evidence="1">Lumazine synthase</shortName>
        <ecNumber evidence="1">2.5.1.78</ecNumber>
    </recommendedName>
</protein>
<evidence type="ECO:0000255" key="1">
    <source>
        <dbReference type="HAMAP-Rule" id="MF_00178"/>
    </source>
</evidence>
<name>RISB_CHLTR</name>
<comment type="function">
    <text evidence="1">Catalyzes the formation of 6,7-dimethyl-8-ribityllumazine by condensation of 5-amino-6-(D-ribitylamino)uracil with 3,4-dihydroxy-2-butanone 4-phosphate. This is the penultimate step in the biosynthesis of riboflavin.</text>
</comment>
<comment type="catalytic activity">
    <reaction evidence="1">
        <text>(2S)-2-hydroxy-3-oxobutyl phosphate + 5-amino-6-(D-ribitylamino)uracil = 6,7-dimethyl-8-(1-D-ribityl)lumazine + phosphate + 2 H2O + H(+)</text>
        <dbReference type="Rhea" id="RHEA:26152"/>
        <dbReference type="ChEBI" id="CHEBI:15377"/>
        <dbReference type="ChEBI" id="CHEBI:15378"/>
        <dbReference type="ChEBI" id="CHEBI:15934"/>
        <dbReference type="ChEBI" id="CHEBI:43474"/>
        <dbReference type="ChEBI" id="CHEBI:58201"/>
        <dbReference type="ChEBI" id="CHEBI:58830"/>
        <dbReference type="EC" id="2.5.1.78"/>
    </reaction>
</comment>
<comment type="pathway">
    <text evidence="1">Cofactor biosynthesis; riboflavin biosynthesis; riboflavin from 2-hydroxy-3-oxobutyl phosphate and 5-amino-6-(D-ribitylamino)uracil: step 1/2.</text>
</comment>
<comment type="similarity">
    <text evidence="1">Belongs to the DMRL synthase family.</text>
</comment>
<organism>
    <name type="scientific">Chlamydia trachomatis serovar D (strain ATCC VR-885 / DSM 19411 / UW-3/Cx)</name>
    <dbReference type="NCBI Taxonomy" id="272561"/>
    <lineage>
        <taxon>Bacteria</taxon>
        <taxon>Pseudomonadati</taxon>
        <taxon>Chlamydiota</taxon>
        <taxon>Chlamydiia</taxon>
        <taxon>Chlamydiales</taxon>
        <taxon>Chlamydiaceae</taxon>
        <taxon>Chlamydia/Chlamydophila group</taxon>
        <taxon>Chlamydia</taxon>
    </lineage>
</organism>